<gene>
    <name type="primary">SPINZ</name>
</gene>
<evidence type="ECO:0000256" key="1">
    <source>
        <dbReference type="SAM" id="MobiDB-lite"/>
    </source>
</evidence>
<evidence type="ECO:0000269" key="2">
    <source>
    </source>
</evidence>
<evidence type="ECO:0000305" key="3"/>
<sequence>MKTPFGKSPGQRSRADAGHAGVSASMMKKRTSHKKHRNNVGPSKPISQPRRNIVGCRIQHGWKEGSGPVTQWKGTVLDQVPVNPSLYLIKYDGFDCVYGLELHKDERVSALEVLPDRVASSRISDAHLADTMIGKAVEHMFETEDGSKDEWRGMVLARAPIMNTWFYITYEKDPVLYMYQLLDDYKEGDLRIMPDSNDSPPAEREPGEVVDSLVGKQVEYAKEDGSKRTGMVIHQVEAKPSVYFIKFDDDFHIYVYDLVKTS</sequence>
<reference key="1">
    <citation type="journal article" date="2001" name="Chromosome Res.">
        <title>Chicken spindlin genes on W and Z chromosomes: transcriptional expression of both genes and dynamic behavior of spindlin in interphase and mitotic cells.</title>
        <authorList>
            <person name="Itoh Y."/>
            <person name="Hori T."/>
            <person name="Saitoh H."/>
            <person name="Mizuno S."/>
        </authorList>
    </citation>
    <scope>NUCLEOTIDE SEQUENCE [MRNA]</scope>
    <scope>FUNCTION</scope>
    <scope>SUBCELLULAR LOCATION</scope>
    <scope>TISSUE SPECIFICITY</scope>
    <scope>DEVELOPMENTAL STAGE</scope>
    <source>
        <tissue>Testis</tissue>
    </source>
</reference>
<feature type="chain" id="PRO_0000259594" description="Spindlin-Z">
    <location>
        <begin position="1"/>
        <end position="262"/>
    </location>
</feature>
<feature type="region of interest" description="Disordered" evidence="1">
    <location>
        <begin position="1"/>
        <end position="50"/>
    </location>
</feature>
<feature type="compositionally biased region" description="Basic residues" evidence="1">
    <location>
        <begin position="27"/>
        <end position="38"/>
    </location>
</feature>
<accession>Q90WG1</accession>
<dbReference type="EMBL" id="AB047853">
    <property type="protein sequence ID" value="BAB59130.1"/>
    <property type="molecule type" value="mRNA"/>
</dbReference>
<dbReference type="RefSeq" id="NP_989964.1">
    <property type="nucleotide sequence ID" value="NM_204633.1"/>
</dbReference>
<dbReference type="RefSeq" id="XP_015135722.1">
    <property type="nucleotide sequence ID" value="XM_015280236.1"/>
</dbReference>
<dbReference type="RefSeq" id="XP_015135723.1">
    <property type="nucleotide sequence ID" value="XM_015280237.1"/>
</dbReference>
<dbReference type="RefSeq" id="XP_015135724.1">
    <property type="nucleotide sequence ID" value="XM_015280238.1"/>
</dbReference>
<dbReference type="RefSeq" id="XP_015135725.1">
    <property type="nucleotide sequence ID" value="XM_015280239.1"/>
</dbReference>
<dbReference type="SMR" id="Q90WG1"/>
<dbReference type="FunCoup" id="Q90WG1">
    <property type="interactions" value="1128"/>
</dbReference>
<dbReference type="STRING" id="9031.ENSGALP00000041372"/>
<dbReference type="PaxDb" id="9031-ENSGALP00000024012"/>
<dbReference type="Ensembl" id="ENSGALT00010021529.1">
    <property type="protein sequence ID" value="ENSGALP00010012266.1"/>
    <property type="gene ID" value="ENSGALG00010009031.1"/>
</dbReference>
<dbReference type="GeneID" id="395344"/>
<dbReference type="KEGG" id="gga:395344"/>
<dbReference type="CTD" id="10927"/>
<dbReference type="VEuPathDB" id="HostDB:geneid_395344"/>
<dbReference type="eggNOG" id="ENOG502QRYD">
    <property type="taxonomic scope" value="Eukaryota"/>
</dbReference>
<dbReference type="GeneTree" id="ENSGT00950000182925"/>
<dbReference type="HOGENOM" id="CLU_068595_0_0_1"/>
<dbReference type="InParanoid" id="Q90WG1"/>
<dbReference type="OMA" id="VLPDRVX"/>
<dbReference type="OrthoDB" id="9944558at2759"/>
<dbReference type="PhylomeDB" id="Q90WG1"/>
<dbReference type="TreeFam" id="TF332665"/>
<dbReference type="PRO" id="PR:Q90WG1"/>
<dbReference type="Proteomes" id="UP000000539">
    <property type="component" value="Chromosome Z"/>
</dbReference>
<dbReference type="Bgee" id="ENSGALG00000014916">
    <property type="expression patterns" value="Expressed in spermatid and 13 other cell types or tissues"/>
</dbReference>
<dbReference type="GO" id="GO:0005634">
    <property type="term" value="C:nucleus"/>
    <property type="evidence" value="ECO:0007669"/>
    <property type="project" value="UniProtKB-SubCell"/>
</dbReference>
<dbReference type="GO" id="GO:0007276">
    <property type="term" value="P:gamete generation"/>
    <property type="evidence" value="ECO:0007669"/>
    <property type="project" value="InterPro"/>
</dbReference>
<dbReference type="FunFam" id="2.80.10.70:FF:000001">
    <property type="entry name" value="Spindlin 1"/>
    <property type="match status" value="1"/>
</dbReference>
<dbReference type="Gene3D" id="2.80.10.70">
    <property type="entry name" value="Spindlin/Ssty"/>
    <property type="match status" value="1"/>
</dbReference>
<dbReference type="InterPro" id="IPR003671">
    <property type="entry name" value="SPIN/Ssty"/>
</dbReference>
<dbReference type="InterPro" id="IPR042567">
    <property type="entry name" value="SPIN/Ssty_sf"/>
</dbReference>
<dbReference type="PANTHER" id="PTHR10405">
    <property type="entry name" value="SPINDLIN"/>
    <property type="match status" value="1"/>
</dbReference>
<dbReference type="Pfam" id="PF02513">
    <property type="entry name" value="Spin-Ssty"/>
    <property type="match status" value="3"/>
</dbReference>
<protein>
    <recommendedName>
        <fullName>Spindlin-Z</fullName>
        <shortName>chSpin-Z</shortName>
    </recommendedName>
</protein>
<name>SPINZ_CHICK</name>
<comment type="function">
    <text evidence="2">May play a role in mitosis.</text>
</comment>
<comment type="subcellular location">
    <subcellularLocation>
        <location evidence="2">Nucleus</location>
    </subcellularLocation>
</comment>
<comment type="tissue specificity">
    <text evidence="2">Expressed in several tissues including testis.</text>
</comment>
<comment type="developmental stage">
    <text evidence="2">Expressed in early embryo.</text>
</comment>
<comment type="similarity">
    <text evidence="3">Belongs to the SPIN/STSY family.</text>
</comment>
<proteinExistence type="evidence at transcript level"/>
<keyword id="KW-0131">Cell cycle</keyword>
<keyword id="KW-0539">Nucleus</keyword>
<keyword id="KW-1185">Reference proteome</keyword>
<organism>
    <name type="scientific">Gallus gallus</name>
    <name type="common">Chicken</name>
    <dbReference type="NCBI Taxonomy" id="9031"/>
    <lineage>
        <taxon>Eukaryota</taxon>
        <taxon>Metazoa</taxon>
        <taxon>Chordata</taxon>
        <taxon>Craniata</taxon>
        <taxon>Vertebrata</taxon>
        <taxon>Euteleostomi</taxon>
        <taxon>Archelosauria</taxon>
        <taxon>Archosauria</taxon>
        <taxon>Dinosauria</taxon>
        <taxon>Saurischia</taxon>
        <taxon>Theropoda</taxon>
        <taxon>Coelurosauria</taxon>
        <taxon>Aves</taxon>
        <taxon>Neognathae</taxon>
        <taxon>Galloanserae</taxon>
        <taxon>Galliformes</taxon>
        <taxon>Phasianidae</taxon>
        <taxon>Phasianinae</taxon>
        <taxon>Gallus</taxon>
    </lineage>
</organism>